<evidence type="ECO:0000255" key="1">
    <source>
        <dbReference type="HAMAP-Rule" id="MF_00366"/>
    </source>
</evidence>
<name>RPOZ_THENN</name>
<keyword id="KW-0240">DNA-directed RNA polymerase</keyword>
<keyword id="KW-0548">Nucleotidyltransferase</keyword>
<keyword id="KW-0804">Transcription</keyword>
<keyword id="KW-0808">Transferase</keyword>
<gene>
    <name evidence="1" type="primary">rpoZ</name>
    <name type="ordered locus">CTN_0875</name>
</gene>
<organism>
    <name type="scientific">Thermotoga neapolitana (strain ATCC 49049 / DSM 4359 / NBRC 107923 / NS-E)</name>
    <dbReference type="NCBI Taxonomy" id="309803"/>
    <lineage>
        <taxon>Bacteria</taxon>
        <taxon>Thermotogati</taxon>
        <taxon>Thermotogota</taxon>
        <taxon>Thermotogae</taxon>
        <taxon>Thermotogales</taxon>
        <taxon>Thermotogaceae</taxon>
        <taxon>Thermotoga</taxon>
    </lineage>
</organism>
<feature type="chain" id="PRO_1000133758" description="DNA-directed RNA polymerase subunit omega">
    <location>
        <begin position="1"/>
        <end position="79"/>
    </location>
</feature>
<proteinExistence type="inferred from homology"/>
<accession>B9K7W8</accession>
<reference key="1">
    <citation type="submission" date="2007-11" db="EMBL/GenBank/DDBJ databases">
        <title>The genome sequence of the hyperthermophilic bacterium Thermotoga neapolitana.</title>
        <authorList>
            <person name="Lim S.K."/>
            <person name="Kim J.S."/>
            <person name="Cha S.H."/>
            <person name="Park B.C."/>
            <person name="Lee D.S."/>
            <person name="Tae H.S."/>
            <person name="Kim S.-J."/>
            <person name="Kim J.J."/>
            <person name="Park K.J."/>
            <person name="Lee S.Y."/>
        </authorList>
    </citation>
    <scope>NUCLEOTIDE SEQUENCE [LARGE SCALE GENOMIC DNA]</scope>
    <source>
        <strain>ATCC 49049 / DSM 4359 / NBRC 107923 / NS-E</strain>
    </source>
</reference>
<dbReference type="EC" id="2.7.7.6" evidence="1"/>
<dbReference type="EMBL" id="CP000916">
    <property type="protein sequence ID" value="ACM23051.1"/>
    <property type="molecule type" value="Genomic_DNA"/>
</dbReference>
<dbReference type="RefSeq" id="WP_015919368.1">
    <property type="nucleotide sequence ID" value="NC_011978.1"/>
</dbReference>
<dbReference type="SMR" id="B9K7W8"/>
<dbReference type="STRING" id="309803.CTN_0875"/>
<dbReference type="KEGG" id="tna:CTN_0875"/>
<dbReference type="eggNOG" id="COG1758">
    <property type="taxonomic scope" value="Bacteria"/>
</dbReference>
<dbReference type="HOGENOM" id="CLU_125406_4_0_0"/>
<dbReference type="Proteomes" id="UP000000445">
    <property type="component" value="Chromosome"/>
</dbReference>
<dbReference type="GO" id="GO:0000428">
    <property type="term" value="C:DNA-directed RNA polymerase complex"/>
    <property type="evidence" value="ECO:0007669"/>
    <property type="project" value="UniProtKB-KW"/>
</dbReference>
<dbReference type="GO" id="GO:0003677">
    <property type="term" value="F:DNA binding"/>
    <property type="evidence" value="ECO:0007669"/>
    <property type="project" value="UniProtKB-UniRule"/>
</dbReference>
<dbReference type="GO" id="GO:0003899">
    <property type="term" value="F:DNA-directed RNA polymerase activity"/>
    <property type="evidence" value="ECO:0007669"/>
    <property type="project" value="UniProtKB-UniRule"/>
</dbReference>
<dbReference type="GO" id="GO:0006351">
    <property type="term" value="P:DNA-templated transcription"/>
    <property type="evidence" value="ECO:0007669"/>
    <property type="project" value="UniProtKB-UniRule"/>
</dbReference>
<dbReference type="Gene3D" id="3.90.940.10">
    <property type="match status" value="1"/>
</dbReference>
<dbReference type="HAMAP" id="MF_00366">
    <property type="entry name" value="RNApol_bact_RpoZ"/>
    <property type="match status" value="1"/>
</dbReference>
<dbReference type="InterPro" id="IPR003716">
    <property type="entry name" value="DNA-dir_RNA_pol_omega"/>
</dbReference>
<dbReference type="InterPro" id="IPR006110">
    <property type="entry name" value="Pol_omega/Rpo6/RPB6"/>
</dbReference>
<dbReference type="InterPro" id="IPR036161">
    <property type="entry name" value="RPB6/omega-like_sf"/>
</dbReference>
<dbReference type="Pfam" id="PF01192">
    <property type="entry name" value="RNA_pol_Rpb6"/>
    <property type="match status" value="1"/>
</dbReference>
<dbReference type="SMART" id="SM01409">
    <property type="entry name" value="RNA_pol_Rpb6"/>
    <property type="match status" value="1"/>
</dbReference>
<dbReference type="SUPFAM" id="SSF63562">
    <property type="entry name" value="RPB6/omega subunit-like"/>
    <property type="match status" value="1"/>
</dbReference>
<protein>
    <recommendedName>
        <fullName evidence="1">DNA-directed RNA polymerase subunit omega</fullName>
        <shortName evidence="1">RNAP omega subunit</shortName>
        <ecNumber evidence="1">2.7.7.6</ecNumber>
    </recommendedName>
    <alternativeName>
        <fullName evidence="1">RNA polymerase omega subunit</fullName>
    </alternativeName>
    <alternativeName>
        <fullName evidence="1">Transcriptase subunit omega</fullName>
    </alternativeName>
</protein>
<comment type="function">
    <text evidence="1">Promotes RNA polymerase assembly. Latches the N- and C-terminal regions of the beta' subunit thereby facilitating its interaction with the beta and alpha subunits.</text>
</comment>
<comment type="catalytic activity">
    <reaction evidence="1">
        <text>RNA(n) + a ribonucleoside 5'-triphosphate = RNA(n+1) + diphosphate</text>
        <dbReference type="Rhea" id="RHEA:21248"/>
        <dbReference type="Rhea" id="RHEA-COMP:14527"/>
        <dbReference type="Rhea" id="RHEA-COMP:17342"/>
        <dbReference type="ChEBI" id="CHEBI:33019"/>
        <dbReference type="ChEBI" id="CHEBI:61557"/>
        <dbReference type="ChEBI" id="CHEBI:140395"/>
        <dbReference type="EC" id="2.7.7.6"/>
    </reaction>
</comment>
<comment type="subunit">
    <text evidence="1">The RNAP catalytic core consists of 2 alpha, 1 beta, 1 beta' and 1 omega subunit. When a sigma factor is associated with the core the holoenzyme is formed, which can initiate transcription.</text>
</comment>
<comment type="similarity">
    <text evidence="1">Belongs to the RNA polymerase subunit omega family.</text>
</comment>
<sequence>MEKMVKFELKYDELLEKIPYKYAIPVVVAKRAEAIREYARPFVITEDENPVSIAFMELSMNYIRIKNEDILKALIPKVK</sequence>